<accession>Q8FEA7</accession>
<proteinExistence type="inferred from homology"/>
<sequence length="397" mass="41611">MSESVHTNTSLWSKGMKAVIVAQFLSAFGDNALLFATLALLKAQFYPEWSQPILQMVFVGAYILFAPFVGQVADSFAKGRVMMFANGLKLLGAASICFGINPFLGYTLVGVGAAAYSPAKYGILGELTTGSKLVKANGLMEASTIAAILLGSVAGGVLADWHILVALAACALAYGGAVVANIYIPKLAAARPGQSWNLISMTRSFLNACTSLWRNGETRFSLVGTSLFWGAGVTLRFLLVLWVPVALGITDNATPTYLNAMVAIGIVVGAGAAAKLVTLETVSRCMPAGILIGVVVLIFSLQHELLPAYALLMLIGVLGGFFVVPLNALLQERGKKSVGAGNAIAVQNLGENSAMLLMLGIYSLAVMVGIPVVPIGIGFGALFALAITALWIWQRRH</sequence>
<keyword id="KW-0997">Cell inner membrane</keyword>
<keyword id="KW-1003">Cell membrane</keyword>
<keyword id="KW-0445">Lipid transport</keyword>
<keyword id="KW-0472">Membrane</keyword>
<keyword id="KW-1185">Reference proteome</keyword>
<keyword id="KW-0812">Transmembrane</keyword>
<keyword id="KW-1133">Transmembrane helix</keyword>
<keyword id="KW-0813">Transport</keyword>
<evidence type="ECO:0000255" key="1">
    <source>
        <dbReference type="HAMAP-Rule" id="MF_01585"/>
    </source>
</evidence>
<dbReference type="EMBL" id="AE014075">
    <property type="protein sequence ID" value="AAN81875.1"/>
    <property type="molecule type" value="Genomic_DNA"/>
</dbReference>
<dbReference type="RefSeq" id="WP_000004599.1">
    <property type="nucleotide sequence ID" value="NZ_CP051263.1"/>
</dbReference>
<dbReference type="SMR" id="Q8FEA7"/>
<dbReference type="STRING" id="199310.c3430"/>
<dbReference type="KEGG" id="ecc:c3430"/>
<dbReference type="eggNOG" id="COG0477">
    <property type="taxonomic scope" value="Bacteria"/>
</dbReference>
<dbReference type="HOGENOM" id="CLU_047399_0_0_6"/>
<dbReference type="BioCyc" id="ECOL199310:C3430-MONOMER"/>
<dbReference type="Proteomes" id="UP000001410">
    <property type="component" value="Chromosome"/>
</dbReference>
<dbReference type="GO" id="GO:0005886">
    <property type="term" value="C:plasma membrane"/>
    <property type="evidence" value="ECO:0007669"/>
    <property type="project" value="UniProtKB-SubCell"/>
</dbReference>
<dbReference type="GO" id="GO:0051978">
    <property type="term" value="F:lysophospholipid:sodium symporter activity"/>
    <property type="evidence" value="ECO:0007669"/>
    <property type="project" value="InterPro"/>
</dbReference>
<dbReference type="CDD" id="cd06173">
    <property type="entry name" value="MFS_MefA_like"/>
    <property type="match status" value="1"/>
</dbReference>
<dbReference type="FunFam" id="1.20.1250.20:FF:000091">
    <property type="entry name" value="Lysophospholipid transporter LplT"/>
    <property type="match status" value="1"/>
</dbReference>
<dbReference type="Gene3D" id="1.20.1250.20">
    <property type="entry name" value="MFS general substrate transporter like domains"/>
    <property type="match status" value="1"/>
</dbReference>
<dbReference type="HAMAP" id="MF_01585">
    <property type="entry name" value="MFS_LplT"/>
    <property type="match status" value="1"/>
</dbReference>
<dbReference type="InterPro" id="IPR023727">
    <property type="entry name" value="LysoPLipid__transptr_LplT"/>
</dbReference>
<dbReference type="InterPro" id="IPR011701">
    <property type="entry name" value="MFS"/>
</dbReference>
<dbReference type="InterPro" id="IPR036259">
    <property type="entry name" value="MFS_trans_sf"/>
</dbReference>
<dbReference type="NCBIfam" id="NF008397">
    <property type="entry name" value="PRK11195.1"/>
    <property type="match status" value="1"/>
</dbReference>
<dbReference type="PANTHER" id="PTHR43266">
    <property type="entry name" value="MACROLIDE-EFFLUX PROTEIN"/>
    <property type="match status" value="1"/>
</dbReference>
<dbReference type="PANTHER" id="PTHR43266:SF2">
    <property type="entry name" value="MAJOR FACILITATOR SUPERFAMILY (MFS) PROFILE DOMAIN-CONTAINING PROTEIN"/>
    <property type="match status" value="1"/>
</dbReference>
<dbReference type="Pfam" id="PF07690">
    <property type="entry name" value="MFS_1"/>
    <property type="match status" value="1"/>
</dbReference>
<dbReference type="SUPFAM" id="SSF103473">
    <property type="entry name" value="MFS general substrate transporter"/>
    <property type="match status" value="1"/>
</dbReference>
<organism>
    <name type="scientific">Escherichia coli O6:H1 (strain CFT073 / ATCC 700928 / UPEC)</name>
    <dbReference type="NCBI Taxonomy" id="199310"/>
    <lineage>
        <taxon>Bacteria</taxon>
        <taxon>Pseudomonadati</taxon>
        <taxon>Pseudomonadota</taxon>
        <taxon>Gammaproteobacteria</taxon>
        <taxon>Enterobacterales</taxon>
        <taxon>Enterobacteriaceae</taxon>
        <taxon>Escherichia</taxon>
    </lineage>
</organism>
<protein>
    <recommendedName>
        <fullName evidence="1">Lysophospholipid transporter LplT</fullName>
    </recommendedName>
</protein>
<feature type="chain" id="PRO_0000309827" description="Lysophospholipid transporter LplT">
    <location>
        <begin position="1"/>
        <end position="397"/>
    </location>
</feature>
<feature type="topological domain" description="Periplasmic" evidence="1">
    <location>
        <begin position="1"/>
        <end position="17"/>
    </location>
</feature>
<feature type="transmembrane region" description="Helical" evidence="1">
    <location>
        <begin position="18"/>
        <end position="38"/>
    </location>
</feature>
<feature type="topological domain" description="Cytoplasmic" evidence="1">
    <location>
        <begin position="39"/>
        <end position="52"/>
    </location>
</feature>
<feature type="transmembrane region" description="Helical" evidence="1">
    <location>
        <begin position="53"/>
        <end position="73"/>
    </location>
</feature>
<feature type="topological domain" description="Periplasmic" evidence="1">
    <location>
        <begin position="74"/>
        <end position="90"/>
    </location>
</feature>
<feature type="transmembrane region" description="Helical" evidence="1">
    <location>
        <begin position="91"/>
        <end position="111"/>
    </location>
</feature>
<feature type="topological domain" description="Cytoplasmic" evidence="1">
    <location>
        <begin position="112"/>
        <end position="144"/>
    </location>
</feature>
<feature type="transmembrane region" description="Helical" evidence="1">
    <location>
        <begin position="145"/>
        <end position="165"/>
    </location>
</feature>
<feature type="topological domain" description="Periplasmic" evidence="1">
    <location>
        <position position="166"/>
    </location>
</feature>
<feature type="transmembrane region" description="Helical" evidence="1">
    <location>
        <begin position="167"/>
        <end position="187"/>
    </location>
</feature>
<feature type="topological domain" description="Cytoplasmic" evidence="1">
    <location>
        <begin position="188"/>
        <end position="226"/>
    </location>
</feature>
<feature type="transmembrane region" description="Helical" evidence="1">
    <location>
        <begin position="227"/>
        <end position="247"/>
    </location>
</feature>
<feature type="topological domain" description="Periplasmic" evidence="1">
    <location>
        <begin position="248"/>
        <end position="256"/>
    </location>
</feature>
<feature type="transmembrane region" description="Helical" evidence="1">
    <location>
        <begin position="257"/>
        <end position="277"/>
    </location>
</feature>
<feature type="topological domain" description="Cytoplasmic" evidence="1">
    <location>
        <begin position="278"/>
        <end position="280"/>
    </location>
</feature>
<feature type="transmembrane region" description="Helical" evidence="1">
    <location>
        <begin position="281"/>
        <end position="301"/>
    </location>
</feature>
<feature type="topological domain" description="Periplasmic" evidence="1">
    <location>
        <begin position="302"/>
        <end position="304"/>
    </location>
</feature>
<feature type="transmembrane region" description="Helical" evidence="1">
    <location>
        <begin position="305"/>
        <end position="325"/>
    </location>
</feature>
<feature type="topological domain" description="Cytoplasmic" evidence="1">
    <location>
        <begin position="326"/>
        <end position="343"/>
    </location>
</feature>
<feature type="transmembrane region" description="Helical" evidence="1">
    <location>
        <begin position="344"/>
        <end position="364"/>
    </location>
</feature>
<feature type="topological domain" description="Periplasmic" evidence="1">
    <location>
        <begin position="365"/>
        <end position="366"/>
    </location>
</feature>
<feature type="transmembrane region" description="Helical" evidence="1">
    <location>
        <begin position="367"/>
        <end position="387"/>
    </location>
</feature>
<feature type="topological domain" description="Cytoplasmic" evidence="1">
    <location>
        <begin position="388"/>
        <end position="397"/>
    </location>
</feature>
<gene>
    <name evidence="1" type="primary">lplT</name>
    <name type="ordered locus">c3430</name>
</gene>
<comment type="function">
    <text evidence="1">Catalyzes the facilitated diffusion of 2-acyl-glycero-3-phosphoethanolamine (2-acyl-GPE) into the cell.</text>
</comment>
<comment type="subcellular location">
    <subcellularLocation>
        <location evidence="1">Cell inner membrane</location>
        <topology evidence="1">Multi-pass membrane protein</topology>
    </subcellularLocation>
</comment>
<comment type="similarity">
    <text evidence="1">Belongs to the major facilitator superfamily. LplT (TC 2.A.1.42) family.</text>
</comment>
<name>LPLT_ECOL6</name>
<reference key="1">
    <citation type="journal article" date="2002" name="Proc. Natl. Acad. Sci. U.S.A.">
        <title>Extensive mosaic structure revealed by the complete genome sequence of uropathogenic Escherichia coli.</title>
        <authorList>
            <person name="Welch R.A."/>
            <person name="Burland V."/>
            <person name="Plunkett G. III"/>
            <person name="Redford P."/>
            <person name="Roesch P."/>
            <person name="Rasko D."/>
            <person name="Buckles E.L."/>
            <person name="Liou S.-R."/>
            <person name="Boutin A."/>
            <person name="Hackett J."/>
            <person name="Stroud D."/>
            <person name="Mayhew G.F."/>
            <person name="Rose D.J."/>
            <person name="Zhou S."/>
            <person name="Schwartz D.C."/>
            <person name="Perna N.T."/>
            <person name="Mobley H.L.T."/>
            <person name="Donnenberg M.S."/>
            <person name="Blattner F.R."/>
        </authorList>
    </citation>
    <scope>NUCLEOTIDE SEQUENCE [LARGE SCALE GENOMIC DNA]</scope>
    <source>
        <strain>CFT073 / ATCC 700928 / UPEC</strain>
    </source>
</reference>